<feature type="chain" id="PRO_1000127779" description="dTTP/UTP pyrophosphatase">
    <location>
        <begin position="1"/>
        <end position="188"/>
    </location>
</feature>
<feature type="active site" description="Proton acceptor" evidence="1">
    <location>
        <position position="70"/>
    </location>
</feature>
<feature type="site" description="Important for substrate specificity" evidence="1">
    <location>
        <position position="11"/>
    </location>
</feature>
<feature type="site" description="Important for substrate specificity" evidence="1">
    <location>
        <position position="71"/>
    </location>
</feature>
<feature type="site" description="Important for substrate specificity" evidence="1">
    <location>
        <position position="155"/>
    </location>
</feature>
<sequence>MKVILASASQRRQELLIRLCDNFDIIVSDFDEEKVVFENSIDEYVQNIALGKAMDIKEKIKEDAIIISADTIVTLDDKILGKPKDEEDAFNMIKLLQGRSHKVYSGVVVINTKKDLIIKNSVATEVVFSKMNDDEIRKYIKTKEPLDKAGAYGIQGIGGIFVEEIRGCYYNVVGLPLNKLKTMLEEAI</sequence>
<reference key="1">
    <citation type="submission" date="2008-04" db="EMBL/GenBank/DDBJ databases">
        <title>Complete sequence of Clostridium botulinum strain Eklund.</title>
        <authorList>
            <person name="Brinkac L.M."/>
            <person name="Brown J.L."/>
            <person name="Bruce D."/>
            <person name="Detter C."/>
            <person name="Munk C."/>
            <person name="Smith L.A."/>
            <person name="Smith T.J."/>
            <person name="Sutton G."/>
            <person name="Brettin T.S."/>
        </authorList>
    </citation>
    <scope>NUCLEOTIDE SEQUENCE [LARGE SCALE GENOMIC DNA]</scope>
    <source>
        <strain>Eklund 17B / Type B</strain>
    </source>
</reference>
<dbReference type="EC" id="3.6.1.9" evidence="1"/>
<dbReference type="EMBL" id="CP001056">
    <property type="protein sequence ID" value="ACD23107.1"/>
    <property type="molecule type" value="Genomic_DNA"/>
</dbReference>
<dbReference type="SMR" id="B2TK54"/>
<dbReference type="KEGG" id="cbk:CLL_A0561"/>
<dbReference type="PATRIC" id="fig|935198.13.peg.508"/>
<dbReference type="HOGENOM" id="CLU_040416_0_0_9"/>
<dbReference type="Proteomes" id="UP000001195">
    <property type="component" value="Chromosome"/>
</dbReference>
<dbReference type="GO" id="GO:0005737">
    <property type="term" value="C:cytoplasm"/>
    <property type="evidence" value="ECO:0007669"/>
    <property type="project" value="UniProtKB-SubCell"/>
</dbReference>
<dbReference type="GO" id="GO:0036218">
    <property type="term" value="F:dTTP diphosphatase activity"/>
    <property type="evidence" value="ECO:0007669"/>
    <property type="project" value="RHEA"/>
</dbReference>
<dbReference type="GO" id="GO:0036221">
    <property type="term" value="F:UTP diphosphatase activity"/>
    <property type="evidence" value="ECO:0007669"/>
    <property type="project" value="RHEA"/>
</dbReference>
<dbReference type="GO" id="GO:0009117">
    <property type="term" value="P:nucleotide metabolic process"/>
    <property type="evidence" value="ECO:0007669"/>
    <property type="project" value="UniProtKB-KW"/>
</dbReference>
<dbReference type="CDD" id="cd00555">
    <property type="entry name" value="Maf"/>
    <property type="match status" value="1"/>
</dbReference>
<dbReference type="Gene3D" id="3.90.950.10">
    <property type="match status" value="1"/>
</dbReference>
<dbReference type="HAMAP" id="MF_00528">
    <property type="entry name" value="Maf"/>
    <property type="match status" value="1"/>
</dbReference>
<dbReference type="InterPro" id="IPR029001">
    <property type="entry name" value="ITPase-like_fam"/>
</dbReference>
<dbReference type="InterPro" id="IPR003697">
    <property type="entry name" value="Maf-like"/>
</dbReference>
<dbReference type="NCBIfam" id="TIGR00172">
    <property type="entry name" value="maf"/>
    <property type="match status" value="1"/>
</dbReference>
<dbReference type="NCBIfam" id="NF000867">
    <property type="entry name" value="PRK00078.1"/>
    <property type="match status" value="1"/>
</dbReference>
<dbReference type="PANTHER" id="PTHR43213">
    <property type="entry name" value="BIFUNCTIONAL DTTP/UTP PYROPHOSPHATASE/METHYLTRANSFERASE PROTEIN-RELATED"/>
    <property type="match status" value="1"/>
</dbReference>
<dbReference type="PANTHER" id="PTHR43213:SF5">
    <property type="entry name" value="BIFUNCTIONAL DTTP_UTP PYROPHOSPHATASE_METHYLTRANSFERASE PROTEIN-RELATED"/>
    <property type="match status" value="1"/>
</dbReference>
<dbReference type="Pfam" id="PF02545">
    <property type="entry name" value="Maf"/>
    <property type="match status" value="1"/>
</dbReference>
<dbReference type="PIRSF" id="PIRSF006305">
    <property type="entry name" value="Maf"/>
    <property type="match status" value="1"/>
</dbReference>
<dbReference type="SUPFAM" id="SSF52972">
    <property type="entry name" value="ITPase-like"/>
    <property type="match status" value="1"/>
</dbReference>
<accession>B2TK54</accession>
<proteinExistence type="inferred from homology"/>
<comment type="function">
    <text evidence="1">Nucleoside triphosphate pyrophosphatase that hydrolyzes dTTP and UTP. May have a dual role in cell division arrest and in preventing the incorporation of modified nucleotides into cellular nucleic acids.</text>
</comment>
<comment type="catalytic activity">
    <reaction evidence="1">
        <text>dTTP + H2O = dTMP + diphosphate + H(+)</text>
        <dbReference type="Rhea" id="RHEA:28534"/>
        <dbReference type="ChEBI" id="CHEBI:15377"/>
        <dbReference type="ChEBI" id="CHEBI:15378"/>
        <dbReference type="ChEBI" id="CHEBI:33019"/>
        <dbReference type="ChEBI" id="CHEBI:37568"/>
        <dbReference type="ChEBI" id="CHEBI:63528"/>
        <dbReference type="EC" id="3.6.1.9"/>
    </reaction>
</comment>
<comment type="catalytic activity">
    <reaction evidence="1">
        <text>UTP + H2O = UMP + diphosphate + H(+)</text>
        <dbReference type="Rhea" id="RHEA:29395"/>
        <dbReference type="ChEBI" id="CHEBI:15377"/>
        <dbReference type="ChEBI" id="CHEBI:15378"/>
        <dbReference type="ChEBI" id="CHEBI:33019"/>
        <dbReference type="ChEBI" id="CHEBI:46398"/>
        <dbReference type="ChEBI" id="CHEBI:57865"/>
        <dbReference type="EC" id="3.6.1.9"/>
    </reaction>
</comment>
<comment type="cofactor">
    <cofactor evidence="1">
        <name>a divalent metal cation</name>
        <dbReference type="ChEBI" id="CHEBI:60240"/>
    </cofactor>
</comment>
<comment type="subcellular location">
    <subcellularLocation>
        <location evidence="1">Cytoplasm</location>
    </subcellularLocation>
</comment>
<comment type="similarity">
    <text evidence="1">Belongs to the Maf family. YhdE subfamily.</text>
</comment>
<keyword id="KW-0963">Cytoplasm</keyword>
<keyword id="KW-0378">Hydrolase</keyword>
<keyword id="KW-0546">Nucleotide metabolism</keyword>
<gene>
    <name type="ordered locus">CLL_A0561</name>
</gene>
<evidence type="ECO:0000255" key="1">
    <source>
        <dbReference type="HAMAP-Rule" id="MF_00528"/>
    </source>
</evidence>
<name>NTPPA_CLOBB</name>
<protein>
    <recommendedName>
        <fullName evidence="1">dTTP/UTP pyrophosphatase</fullName>
        <shortName evidence="1">dTTPase/UTPase</shortName>
        <ecNumber evidence="1">3.6.1.9</ecNumber>
    </recommendedName>
    <alternativeName>
        <fullName evidence="1">Nucleoside triphosphate pyrophosphatase</fullName>
    </alternativeName>
    <alternativeName>
        <fullName evidence="1">Nucleotide pyrophosphatase</fullName>
        <shortName evidence="1">Nucleotide PPase</shortName>
    </alternativeName>
</protein>
<organism>
    <name type="scientific">Clostridium botulinum (strain Eklund 17B / Type B)</name>
    <dbReference type="NCBI Taxonomy" id="935198"/>
    <lineage>
        <taxon>Bacteria</taxon>
        <taxon>Bacillati</taxon>
        <taxon>Bacillota</taxon>
        <taxon>Clostridia</taxon>
        <taxon>Eubacteriales</taxon>
        <taxon>Clostridiaceae</taxon>
        <taxon>Clostridium</taxon>
    </lineage>
</organism>